<keyword id="KW-0067">ATP-binding</keyword>
<keyword id="KW-0997">Cell inner membrane</keyword>
<keyword id="KW-1003">Cell membrane</keyword>
<keyword id="KW-0963">Cytoplasm</keyword>
<keyword id="KW-0472">Membrane</keyword>
<keyword id="KW-0479">Metal-binding</keyword>
<keyword id="KW-0547">Nucleotide-binding</keyword>
<keyword id="KW-0653">Protein transport</keyword>
<keyword id="KW-1278">Translocase</keyword>
<keyword id="KW-0811">Translocation</keyword>
<keyword id="KW-0813">Transport</keyword>
<keyword id="KW-0862">Zinc</keyword>
<proteinExistence type="inferred from homology"/>
<name>SECA_BORBZ</name>
<sequence>MLKAVLETTIGSKSKRDLKDYLPTLRNINKLERWALLLADEDFSKETEKLKDELKSGNSLENILERAFTLSREAARRRLKERPYDVQIIAGLALHKGKIIEMKTGEGKTLSSVQAAYLNSLTGDGVIIVTVNDYLAERDSNWMKPVFDLLGVSVGVVLSNMDYELRKAQYAKDITYVTNNELGFDYLRDNMRYDLNEKSLRKFNYCIIDEIDSILIDEARTPLIISGPTEGNTNAYLEVNSLVSFLKECSKDPKTGDYPLEIDDLDGDYTVDEKAKRISFTAKGLNNLEQLLVSKGIISGSMYTDSNFNYVHYMTQALKAHLLFLKNREYIVGDSGVEIVDEFTGRVLTGRRYSDGLHQAIEAKEGVRVANENKTMATITFQNLFRMFDKISGMTGTADTEAKEFHKIYNLDVVVVPTNRLLARIDEDDTIYYTEEFKFNAITDEVYKTYKKGQPVLVGTVSIEKSEILSAMFKSRGIKHEVLNAKNHSREAFIIAEAGAKHAVTIATNMAGRGTDIKLGGNIEHRVRKKIGTNVSLEEFQEAVKNERENYLKDYNEVKSLGGLYVIGSERHESRRIDNQLRGRSGRQGDPGRSRFYVSLEDDLMRLFAGDNLRSLMGKLGMATGEPITHSLLTKSLINAQKRVEDRNFEIRKHLLEYDDVITKQRDFIYAQRNSILKDTAIKDRILVALEEYLSFLLEGTKSSTVSNVFLNEVNSIFAYMLESLGSIENISYLDLKAKLMQIAKANLDEKENLIGRDLFNGFLRYEYLKNIDFKFQEHLANLDSLREAVYLRSYANKNPITEYKEEGFSIFSELIKDIKVSTIRRVLQLKLDSNSSDFKSTKKSRNVKPIHKELSGIVINENKSASNVQVVRSSPKIGRNEPCYCGSGKKYKNCHGKS</sequence>
<organism>
    <name type="scientific">Borreliella burgdorferi (strain ZS7)</name>
    <name type="common">Borrelia burgdorferi</name>
    <dbReference type="NCBI Taxonomy" id="445985"/>
    <lineage>
        <taxon>Bacteria</taxon>
        <taxon>Pseudomonadati</taxon>
        <taxon>Spirochaetota</taxon>
        <taxon>Spirochaetia</taxon>
        <taxon>Spirochaetales</taxon>
        <taxon>Borreliaceae</taxon>
        <taxon>Borreliella</taxon>
    </lineage>
</organism>
<protein>
    <recommendedName>
        <fullName evidence="1">Protein translocase subunit SecA</fullName>
        <ecNumber evidence="1">7.4.2.8</ecNumber>
    </recommendedName>
</protein>
<reference key="1">
    <citation type="journal article" date="2011" name="J. Bacteriol.">
        <title>Whole-genome sequences of thirteen isolates of Borrelia burgdorferi.</title>
        <authorList>
            <person name="Schutzer S.E."/>
            <person name="Fraser-Liggett C.M."/>
            <person name="Casjens S.R."/>
            <person name="Qiu W.G."/>
            <person name="Dunn J.J."/>
            <person name="Mongodin E.F."/>
            <person name="Luft B.J."/>
        </authorList>
    </citation>
    <scope>NUCLEOTIDE SEQUENCE [LARGE SCALE GENOMIC DNA]</scope>
    <source>
        <strain>ZS7</strain>
    </source>
</reference>
<feature type="chain" id="PRO_1000144978" description="Protein translocase subunit SecA">
    <location>
        <begin position="1"/>
        <end position="899"/>
    </location>
</feature>
<feature type="binding site" evidence="1">
    <location>
        <position position="87"/>
    </location>
    <ligand>
        <name>ATP</name>
        <dbReference type="ChEBI" id="CHEBI:30616"/>
    </ligand>
</feature>
<feature type="binding site" evidence="1">
    <location>
        <begin position="105"/>
        <end position="109"/>
    </location>
    <ligand>
        <name>ATP</name>
        <dbReference type="ChEBI" id="CHEBI:30616"/>
    </ligand>
</feature>
<feature type="binding site" evidence="1">
    <location>
        <position position="516"/>
    </location>
    <ligand>
        <name>ATP</name>
        <dbReference type="ChEBI" id="CHEBI:30616"/>
    </ligand>
</feature>
<feature type="binding site" evidence="1">
    <location>
        <position position="884"/>
    </location>
    <ligand>
        <name>Zn(2+)</name>
        <dbReference type="ChEBI" id="CHEBI:29105"/>
    </ligand>
</feature>
<feature type="binding site" evidence="1">
    <location>
        <position position="886"/>
    </location>
    <ligand>
        <name>Zn(2+)</name>
        <dbReference type="ChEBI" id="CHEBI:29105"/>
    </ligand>
</feature>
<feature type="binding site" evidence="1">
    <location>
        <position position="895"/>
    </location>
    <ligand>
        <name>Zn(2+)</name>
        <dbReference type="ChEBI" id="CHEBI:29105"/>
    </ligand>
</feature>
<feature type="binding site" evidence="1">
    <location>
        <position position="896"/>
    </location>
    <ligand>
        <name>Zn(2+)</name>
        <dbReference type="ChEBI" id="CHEBI:29105"/>
    </ligand>
</feature>
<evidence type="ECO:0000255" key="1">
    <source>
        <dbReference type="HAMAP-Rule" id="MF_01382"/>
    </source>
</evidence>
<comment type="function">
    <text evidence="1">Part of the Sec protein translocase complex. Interacts with the SecYEG preprotein conducting channel. Has a central role in coupling the hydrolysis of ATP to the transfer of proteins into and across the cell membrane, serving as an ATP-driven molecular motor driving the stepwise translocation of polypeptide chains across the membrane.</text>
</comment>
<comment type="catalytic activity">
    <reaction evidence="1">
        <text>ATP + H2O + cellular proteinSide 1 = ADP + phosphate + cellular proteinSide 2.</text>
        <dbReference type="EC" id="7.4.2.8"/>
    </reaction>
</comment>
<comment type="cofactor">
    <cofactor evidence="1">
        <name>Zn(2+)</name>
        <dbReference type="ChEBI" id="CHEBI:29105"/>
    </cofactor>
    <text evidence="1">May bind 1 zinc ion per subunit.</text>
</comment>
<comment type="subunit">
    <text evidence="1">Monomer and homodimer. Part of the essential Sec protein translocation apparatus which comprises SecA, SecYEG and auxiliary proteins SecDF. Other proteins may also be involved.</text>
</comment>
<comment type="subcellular location">
    <subcellularLocation>
        <location evidence="1">Cell inner membrane</location>
        <topology evidence="1">Peripheral membrane protein</topology>
        <orientation evidence="1">Cytoplasmic side</orientation>
    </subcellularLocation>
    <subcellularLocation>
        <location evidence="1">Cytoplasm</location>
    </subcellularLocation>
    <text evidence="1">Distribution is 50-50.</text>
</comment>
<comment type="similarity">
    <text evidence="1">Belongs to the SecA family.</text>
</comment>
<accession>B7J185</accession>
<gene>
    <name evidence="1" type="primary">secA</name>
    <name type="ordered locus">BbuZS7_0152</name>
</gene>
<dbReference type="EC" id="7.4.2.8" evidence="1"/>
<dbReference type="EMBL" id="CP001205">
    <property type="protein sequence ID" value="ACK74655.1"/>
    <property type="molecule type" value="Genomic_DNA"/>
</dbReference>
<dbReference type="RefSeq" id="WP_002658177.1">
    <property type="nucleotide sequence ID" value="NC_011728.1"/>
</dbReference>
<dbReference type="SMR" id="B7J185"/>
<dbReference type="GeneID" id="56568066"/>
<dbReference type="KEGG" id="bbz:BbuZS7_0152"/>
<dbReference type="HOGENOM" id="CLU_005314_3_0_12"/>
<dbReference type="Proteomes" id="UP000006901">
    <property type="component" value="Chromosome"/>
</dbReference>
<dbReference type="GO" id="GO:0031522">
    <property type="term" value="C:cell envelope Sec protein transport complex"/>
    <property type="evidence" value="ECO:0007669"/>
    <property type="project" value="TreeGrafter"/>
</dbReference>
<dbReference type="GO" id="GO:0005829">
    <property type="term" value="C:cytosol"/>
    <property type="evidence" value="ECO:0007669"/>
    <property type="project" value="TreeGrafter"/>
</dbReference>
<dbReference type="GO" id="GO:0005886">
    <property type="term" value="C:plasma membrane"/>
    <property type="evidence" value="ECO:0007669"/>
    <property type="project" value="UniProtKB-SubCell"/>
</dbReference>
<dbReference type="GO" id="GO:0005524">
    <property type="term" value="F:ATP binding"/>
    <property type="evidence" value="ECO:0007669"/>
    <property type="project" value="UniProtKB-UniRule"/>
</dbReference>
<dbReference type="GO" id="GO:0046872">
    <property type="term" value="F:metal ion binding"/>
    <property type="evidence" value="ECO:0007669"/>
    <property type="project" value="UniProtKB-KW"/>
</dbReference>
<dbReference type="GO" id="GO:0008564">
    <property type="term" value="F:protein-exporting ATPase activity"/>
    <property type="evidence" value="ECO:0007669"/>
    <property type="project" value="UniProtKB-EC"/>
</dbReference>
<dbReference type="GO" id="GO:0065002">
    <property type="term" value="P:intracellular protein transmembrane transport"/>
    <property type="evidence" value="ECO:0007669"/>
    <property type="project" value="UniProtKB-UniRule"/>
</dbReference>
<dbReference type="GO" id="GO:0017038">
    <property type="term" value="P:protein import"/>
    <property type="evidence" value="ECO:0007669"/>
    <property type="project" value="InterPro"/>
</dbReference>
<dbReference type="GO" id="GO:0006605">
    <property type="term" value="P:protein targeting"/>
    <property type="evidence" value="ECO:0007669"/>
    <property type="project" value="UniProtKB-UniRule"/>
</dbReference>
<dbReference type="GO" id="GO:0043952">
    <property type="term" value="P:protein transport by the Sec complex"/>
    <property type="evidence" value="ECO:0007669"/>
    <property type="project" value="TreeGrafter"/>
</dbReference>
<dbReference type="CDD" id="cd17928">
    <property type="entry name" value="DEXDc_SecA"/>
    <property type="match status" value="1"/>
</dbReference>
<dbReference type="CDD" id="cd18803">
    <property type="entry name" value="SF2_C_secA"/>
    <property type="match status" value="1"/>
</dbReference>
<dbReference type="FunFam" id="3.40.50.300:FF:000113">
    <property type="entry name" value="Preprotein translocase subunit SecA"/>
    <property type="match status" value="1"/>
</dbReference>
<dbReference type="Gene3D" id="1.10.3060.10">
    <property type="entry name" value="Helical scaffold and wing domains of SecA"/>
    <property type="match status" value="1"/>
</dbReference>
<dbReference type="Gene3D" id="3.40.50.300">
    <property type="entry name" value="P-loop containing nucleotide triphosphate hydrolases"/>
    <property type="match status" value="2"/>
</dbReference>
<dbReference type="Gene3D" id="3.90.1440.10">
    <property type="entry name" value="SecA, preprotein cross-linking domain"/>
    <property type="match status" value="1"/>
</dbReference>
<dbReference type="HAMAP" id="MF_01382">
    <property type="entry name" value="SecA"/>
    <property type="match status" value="1"/>
</dbReference>
<dbReference type="InterPro" id="IPR014001">
    <property type="entry name" value="Helicase_ATP-bd"/>
</dbReference>
<dbReference type="InterPro" id="IPR001650">
    <property type="entry name" value="Helicase_C-like"/>
</dbReference>
<dbReference type="InterPro" id="IPR027417">
    <property type="entry name" value="P-loop_NTPase"/>
</dbReference>
<dbReference type="InterPro" id="IPR004027">
    <property type="entry name" value="SEC_C_motif"/>
</dbReference>
<dbReference type="InterPro" id="IPR000185">
    <property type="entry name" value="SecA"/>
</dbReference>
<dbReference type="InterPro" id="IPR020937">
    <property type="entry name" value="SecA_CS"/>
</dbReference>
<dbReference type="InterPro" id="IPR011115">
    <property type="entry name" value="SecA_DEAD"/>
</dbReference>
<dbReference type="InterPro" id="IPR014018">
    <property type="entry name" value="SecA_motor_DEAD"/>
</dbReference>
<dbReference type="InterPro" id="IPR011130">
    <property type="entry name" value="SecA_preprotein_X-link_dom"/>
</dbReference>
<dbReference type="InterPro" id="IPR044722">
    <property type="entry name" value="SecA_SF2_C"/>
</dbReference>
<dbReference type="InterPro" id="IPR011116">
    <property type="entry name" value="SecA_Wing/Scaffold"/>
</dbReference>
<dbReference type="InterPro" id="IPR036266">
    <property type="entry name" value="SecA_Wing/Scaffold_sf"/>
</dbReference>
<dbReference type="InterPro" id="IPR036670">
    <property type="entry name" value="SecA_X-link_sf"/>
</dbReference>
<dbReference type="NCBIfam" id="NF009538">
    <property type="entry name" value="PRK12904.1"/>
    <property type="match status" value="1"/>
</dbReference>
<dbReference type="NCBIfam" id="TIGR00963">
    <property type="entry name" value="secA"/>
    <property type="match status" value="1"/>
</dbReference>
<dbReference type="PANTHER" id="PTHR30612:SF0">
    <property type="entry name" value="CHLOROPLAST PROTEIN-TRANSPORTING ATPASE"/>
    <property type="match status" value="1"/>
</dbReference>
<dbReference type="PANTHER" id="PTHR30612">
    <property type="entry name" value="SECA INNER MEMBRANE COMPONENT OF SEC PROTEIN SECRETION SYSTEM"/>
    <property type="match status" value="1"/>
</dbReference>
<dbReference type="Pfam" id="PF21090">
    <property type="entry name" value="P-loop_SecA"/>
    <property type="match status" value="1"/>
</dbReference>
<dbReference type="Pfam" id="PF02810">
    <property type="entry name" value="SEC-C"/>
    <property type="match status" value="1"/>
</dbReference>
<dbReference type="Pfam" id="PF07517">
    <property type="entry name" value="SecA_DEAD"/>
    <property type="match status" value="1"/>
</dbReference>
<dbReference type="Pfam" id="PF01043">
    <property type="entry name" value="SecA_PP_bind"/>
    <property type="match status" value="1"/>
</dbReference>
<dbReference type="Pfam" id="PF07516">
    <property type="entry name" value="SecA_SW"/>
    <property type="match status" value="1"/>
</dbReference>
<dbReference type="PRINTS" id="PR00906">
    <property type="entry name" value="SECA"/>
</dbReference>
<dbReference type="SMART" id="SM00957">
    <property type="entry name" value="SecA_DEAD"/>
    <property type="match status" value="1"/>
</dbReference>
<dbReference type="SMART" id="SM00958">
    <property type="entry name" value="SecA_PP_bind"/>
    <property type="match status" value="1"/>
</dbReference>
<dbReference type="SUPFAM" id="SSF81886">
    <property type="entry name" value="Helical scaffold and wing domains of SecA"/>
    <property type="match status" value="1"/>
</dbReference>
<dbReference type="SUPFAM" id="SSF52540">
    <property type="entry name" value="P-loop containing nucleoside triphosphate hydrolases"/>
    <property type="match status" value="2"/>
</dbReference>
<dbReference type="SUPFAM" id="SSF81767">
    <property type="entry name" value="Pre-protein crosslinking domain of SecA"/>
    <property type="match status" value="1"/>
</dbReference>
<dbReference type="PROSITE" id="PS01312">
    <property type="entry name" value="SECA"/>
    <property type="match status" value="1"/>
</dbReference>
<dbReference type="PROSITE" id="PS51196">
    <property type="entry name" value="SECA_MOTOR_DEAD"/>
    <property type="match status" value="1"/>
</dbReference>